<organism>
    <name type="scientific">Mus musculus</name>
    <name type="common">Mouse</name>
    <dbReference type="NCBI Taxonomy" id="10090"/>
    <lineage>
        <taxon>Eukaryota</taxon>
        <taxon>Metazoa</taxon>
        <taxon>Chordata</taxon>
        <taxon>Craniata</taxon>
        <taxon>Vertebrata</taxon>
        <taxon>Euteleostomi</taxon>
        <taxon>Mammalia</taxon>
        <taxon>Eutheria</taxon>
        <taxon>Euarchontoglires</taxon>
        <taxon>Glires</taxon>
        <taxon>Rodentia</taxon>
        <taxon>Myomorpha</taxon>
        <taxon>Muroidea</taxon>
        <taxon>Muridae</taxon>
        <taxon>Murinae</taxon>
        <taxon>Mus</taxon>
        <taxon>Mus</taxon>
    </lineage>
</organism>
<name>UBXN7_MOUSE</name>
<reference key="1">
    <citation type="journal article" date="2004" name="Genome Res.">
        <title>The status, quality, and expansion of the NIH full-length cDNA project: the Mammalian Gene Collection (MGC).</title>
        <authorList>
            <consortium name="The MGC Project Team"/>
        </authorList>
    </citation>
    <scope>NUCLEOTIDE SEQUENCE [LARGE SCALE MRNA]</scope>
    <source>
        <strain>C57BL/6J</strain>
        <tissue>Brain</tissue>
    </source>
</reference>
<reference key="2">
    <citation type="journal article" date="2003" name="DNA Res.">
        <title>Prediction of the coding sequences of mouse homologues of KIAA gene: III. The complete nucleotide sequences of 500 mouse KIAA-homologous cDNAs identified by screening of terminal sequences of cDNA clones randomly sampled from size-fractionated libraries.</title>
        <authorList>
            <person name="Okazaki N."/>
            <person name="Kikuno R."/>
            <person name="Ohara R."/>
            <person name="Inamoto S."/>
            <person name="Koseki H."/>
            <person name="Hiraoka S."/>
            <person name="Saga Y."/>
            <person name="Nagase T."/>
            <person name="Ohara O."/>
            <person name="Koga H."/>
        </authorList>
    </citation>
    <scope>NUCLEOTIDE SEQUENCE [LARGE SCALE MRNA] OF 101-467</scope>
    <source>
        <tissue>Embryonic tail</tissue>
    </source>
</reference>
<reference key="3">
    <citation type="journal article" date="2004" name="Mol. Cell. Proteomics">
        <title>Phosphoproteomic analysis of the developing mouse brain.</title>
        <authorList>
            <person name="Ballif B.A."/>
            <person name="Villen J."/>
            <person name="Beausoleil S.A."/>
            <person name="Schwartz D."/>
            <person name="Gygi S.P."/>
        </authorList>
    </citation>
    <scope>PHOSPHORYLATION [LARGE SCALE ANALYSIS] AT SER-266</scope>
    <scope>IDENTIFICATION BY MASS SPECTROMETRY [LARGE SCALE ANALYSIS]</scope>
    <source>
        <tissue>Embryonic brain</tissue>
    </source>
</reference>
<reference key="4">
    <citation type="journal article" date="2007" name="Proc. Natl. Acad. Sci. U.S.A.">
        <title>Large-scale phosphorylation analysis of mouse liver.</title>
        <authorList>
            <person name="Villen J."/>
            <person name="Beausoleil S.A."/>
            <person name="Gerber S.A."/>
            <person name="Gygi S.P."/>
        </authorList>
    </citation>
    <scope>IDENTIFICATION BY MASS SPECTROMETRY [LARGE SCALE ANALYSIS]</scope>
    <source>
        <tissue>Liver</tissue>
    </source>
</reference>
<reference key="5">
    <citation type="journal article" date="2010" name="Cell">
        <title>A tissue-specific atlas of mouse protein phosphorylation and expression.</title>
        <authorList>
            <person name="Huttlin E.L."/>
            <person name="Jedrychowski M.P."/>
            <person name="Elias J.E."/>
            <person name="Goswami T."/>
            <person name="Rad R."/>
            <person name="Beausoleil S.A."/>
            <person name="Villen J."/>
            <person name="Haas W."/>
            <person name="Sowa M.E."/>
            <person name="Gygi S.P."/>
        </authorList>
    </citation>
    <scope>PHOSPHORYLATION [LARGE SCALE ANALYSIS] AT SER-256; SER-266 AND SER-373</scope>
    <scope>IDENTIFICATION BY MASS SPECTROMETRY [LARGE SCALE ANALYSIS]</scope>
    <source>
        <tissue>Brain</tissue>
        <tissue>Brown adipose tissue</tissue>
        <tissue>Heart</tissue>
        <tissue>Kidney</tissue>
        <tissue>Liver</tissue>
        <tissue>Lung</tissue>
        <tissue>Pancreas</tissue>
        <tissue>Spleen</tissue>
        <tissue>Testis</tissue>
    </source>
</reference>
<gene>
    <name type="primary">Ubxn7</name>
    <name type="synonym">Kiaa0794</name>
    <name type="synonym">Ubxd7</name>
</gene>
<comment type="function">
    <text evidence="1">Ubiquitin-binding adapter that links a subset of NEDD8-associated cullin ring ligases (CRLs) to the segregase VCP/p97, to regulate turnover of their ubiquitination substrates (By similarity).</text>
</comment>
<comment type="subunit">
    <text evidence="1">Interacts with neddylated CUL2, ubiquitinated HIF1A, and VCP/p97.</text>
</comment>
<comment type="subcellular location">
    <subcellularLocation>
        <location evidence="1">Nucleus</location>
    </subcellularLocation>
</comment>
<comment type="domain">
    <text evidence="1">The UIM (ubiquitin-interacting motif) is required to engage the NEDD8 modification on cullins.</text>
</comment>
<comment type="domain">
    <text evidence="1">The UBX domain mediates interaction with VCP/p97.</text>
</comment>
<comment type="domain">
    <text evidence="1">The UBA domain is required for binding ubiquitinated-protein substrates.</text>
</comment>
<comment type="sequence caution" evidence="4">
    <conflict type="erroneous initiation">
        <sequence resource="EMBL-CDS" id="AAH62904"/>
    </conflict>
</comment>
<protein>
    <recommendedName>
        <fullName>UBX domain-containing protein 7</fullName>
    </recommendedName>
</protein>
<accession>Q6P5G6</accession>
<accession>Q6ZQ44</accession>
<feature type="initiator methionine" description="Removed" evidence="1">
    <location>
        <position position="1"/>
    </location>
</feature>
<feature type="chain" id="PRO_0000211036" description="UBX domain-containing protein 7">
    <location>
        <begin position="2"/>
        <end position="467"/>
    </location>
</feature>
<feature type="domain" description="UBA">
    <location>
        <begin position="2"/>
        <end position="54"/>
    </location>
</feature>
<feature type="repeat" description="ubiquitin-interacting motif (UIM)">
    <location>
        <begin position="263"/>
        <end position="282"/>
    </location>
</feature>
<feature type="domain" description="UBX" evidence="2">
    <location>
        <begin position="386"/>
        <end position="463"/>
    </location>
</feature>
<feature type="region of interest" description="Disordered" evidence="3">
    <location>
        <begin position="57"/>
        <end position="77"/>
    </location>
</feature>
<feature type="region of interest" description="Disordered" evidence="3">
    <location>
        <begin position="240"/>
        <end position="260"/>
    </location>
</feature>
<feature type="region of interest" description="Disordered" evidence="3">
    <location>
        <begin position="281"/>
        <end position="364"/>
    </location>
</feature>
<feature type="compositionally biased region" description="Polar residues" evidence="3">
    <location>
        <begin position="59"/>
        <end position="70"/>
    </location>
</feature>
<feature type="compositionally biased region" description="Basic and acidic residues" evidence="3">
    <location>
        <begin position="330"/>
        <end position="344"/>
    </location>
</feature>
<feature type="modified residue" description="N-acetylalanine" evidence="1">
    <location>
        <position position="2"/>
    </location>
</feature>
<feature type="modified residue" description="Phosphoserine" evidence="6">
    <location>
        <position position="256"/>
    </location>
</feature>
<feature type="modified residue" description="Phosphoserine" evidence="1">
    <location>
        <position position="258"/>
    </location>
</feature>
<feature type="modified residue" description="Phosphoserine" evidence="1">
    <location>
        <position position="263"/>
    </location>
</feature>
<feature type="modified residue" description="Phosphoserine" evidence="5 6">
    <location>
        <position position="266"/>
    </location>
</feature>
<feature type="modified residue" description="Phosphoserine" evidence="6">
    <location>
        <position position="373"/>
    </location>
</feature>
<feature type="cross-link" description="Glycyl lysine isopeptide (Lys-Gly) (interchain with G-Cter in SUMO2)" evidence="1">
    <location>
        <position position="84"/>
    </location>
</feature>
<feature type="cross-link" description="Glycyl lysine isopeptide (Lys-Gly) (interchain with G-Cter in SUMO2)" evidence="1">
    <location>
        <position position="112"/>
    </location>
</feature>
<sequence>MAAHGGSAASSALKGLIQQFTAITGASESVGKHMLEACNNNLEMAVTMFLDGGGIAEEPSTSSASVSTVRPHTEEEVRAPIPQKQEILVEPEPLFGVRQEQELRNGGAIDKKLTTLADLFRPPIDLMHKGSFETAKECGQMQNKWLMINIQNVQDFACQCLNRDVWSNEAVKNIIREHFIFWQVYHDSEEGQRYIQFYKLGDFPYVSILDPRTGQKLVEWHQLDVSSFLDQVTGFLGEHGQLDGLSSSPPKKCARSESLIDASEDSQLEAAIRASLQETHFDSAQAKQDSRSDEESESELFSGSEEFISVCGSDEEEEVENLAKSRKSPHKDLGHRKEENRRPLTEPPARTEPGTATNHQGLPSMDSEVLEMSPEKSDGIVEGIDVNGPKAQLMLRYPDGKREQITLPEQAKLLALVKHVQSKGYPNERFELLTNFPRRKLSHLDYDITLQEAGLCPQETVFVQERN</sequence>
<dbReference type="EMBL" id="BC062904">
    <property type="protein sequence ID" value="AAH62904.1"/>
    <property type="status" value="ALT_INIT"/>
    <property type="molecule type" value="mRNA"/>
</dbReference>
<dbReference type="EMBL" id="AK129218">
    <property type="protein sequence ID" value="BAC98028.1"/>
    <property type="molecule type" value="mRNA"/>
</dbReference>
<dbReference type="RefSeq" id="NP_001392826.1">
    <property type="nucleotide sequence ID" value="NM_001405897.1"/>
</dbReference>
<dbReference type="RefSeq" id="XP_006522142.1">
    <property type="nucleotide sequence ID" value="XM_006522079.3"/>
</dbReference>
<dbReference type="SMR" id="Q6P5G6"/>
<dbReference type="BioGRID" id="230246">
    <property type="interactions" value="31"/>
</dbReference>
<dbReference type="FunCoup" id="Q6P5G6">
    <property type="interactions" value="4352"/>
</dbReference>
<dbReference type="STRING" id="10090.ENSMUSP00000110804"/>
<dbReference type="GlyGen" id="Q6P5G6">
    <property type="glycosylation" value="1 site, 1 O-linked glycan (1 site)"/>
</dbReference>
<dbReference type="iPTMnet" id="Q6P5G6"/>
<dbReference type="jPOST" id="Q6P5G6"/>
<dbReference type="PaxDb" id="10090-ENSMUSP00000110804"/>
<dbReference type="PeptideAtlas" id="Q6P5G6"/>
<dbReference type="ProteomicsDB" id="298188"/>
<dbReference type="Pumba" id="Q6P5G6"/>
<dbReference type="Antibodypedia" id="66084">
    <property type="antibodies" value="32 antibodies from 11 providers"/>
</dbReference>
<dbReference type="Ensembl" id="ENSMUST00000232137.2">
    <property type="protein sequence ID" value="ENSMUSP00000156376.2"/>
    <property type="gene ID" value="ENSMUSG00000053774.10"/>
</dbReference>
<dbReference type="GeneID" id="224111"/>
<dbReference type="UCSC" id="uc007yyq.2">
    <property type="organism name" value="mouse"/>
</dbReference>
<dbReference type="AGR" id="MGI:2146388"/>
<dbReference type="MGI" id="MGI:2146388">
    <property type="gene designation" value="Ubxn7"/>
</dbReference>
<dbReference type="VEuPathDB" id="HostDB:ENSMUSG00000053774"/>
<dbReference type="eggNOG" id="KOG0260">
    <property type="taxonomic scope" value="Eukaryota"/>
</dbReference>
<dbReference type="eggNOG" id="KOG1364">
    <property type="taxonomic scope" value="Eukaryota"/>
</dbReference>
<dbReference type="GeneTree" id="ENSGT00390000018687"/>
<dbReference type="InParanoid" id="Q6P5G6"/>
<dbReference type="PhylomeDB" id="Q6P5G6"/>
<dbReference type="Reactome" id="R-MMU-8951664">
    <property type="pathway name" value="Neddylation"/>
</dbReference>
<dbReference type="Reactome" id="R-MMU-9755511">
    <property type="pathway name" value="KEAP1-NFE2L2 pathway"/>
</dbReference>
<dbReference type="BioGRID-ORCS" id="224111">
    <property type="hits" value="3 hits in 77 CRISPR screens"/>
</dbReference>
<dbReference type="ChiTaRS" id="Ubxn7">
    <property type="organism name" value="mouse"/>
</dbReference>
<dbReference type="PRO" id="PR:Q6P5G6"/>
<dbReference type="Proteomes" id="UP000000589">
    <property type="component" value="Chromosome 16"/>
</dbReference>
<dbReference type="RNAct" id="Q6P5G6">
    <property type="molecule type" value="protein"/>
</dbReference>
<dbReference type="Bgee" id="ENSMUSG00000053774">
    <property type="expression patterns" value="Expressed in cleaving embryo and 227 other cell types or tissues"/>
</dbReference>
<dbReference type="ExpressionAtlas" id="Q6P5G6">
    <property type="expression patterns" value="baseline and differential"/>
</dbReference>
<dbReference type="GO" id="GO:0005634">
    <property type="term" value="C:nucleus"/>
    <property type="evidence" value="ECO:0007669"/>
    <property type="project" value="UniProtKB-SubCell"/>
</dbReference>
<dbReference type="CDD" id="cd02958">
    <property type="entry name" value="UAS"/>
    <property type="match status" value="1"/>
</dbReference>
<dbReference type="CDD" id="cd14345">
    <property type="entry name" value="UBA_UBXD7"/>
    <property type="match status" value="1"/>
</dbReference>
<dbReference type="CDD" id="cd01773">
    <property type="entry name" value="UBX_UBXN7"/>
    <property type="match status" value="1"/>
</dbReference>
<dbReference type="FunFam" id="3.10.20.90:FF:000097">
    <property type="entry name" value="UBX domain-containing protein 7"/>
    <property type="match status" value="1"/>
</dbReference>
<dbReference type="FunFam" id="3.40.30.10:FF:000079">
    <property type="entry name" value="UBX domain-containing protein 7"/>
    <property type="match status" value="1"/>
</dbReference>
<dbReference type="Gene3D" id="1.10.8.10">
    <property type="entry name" value="DNA helicase RuvA subunit, C-terminal domain"/>
    <property type="match status" value="1"/>
</dbReference>
<dbReference type="Gene3D" id="3.40.30.10">
    <property type="entry name" value="Glutaredoxin"/>
    <property type="match status" value="1"/>
</dbReference>
<dbReference type="Gene3D" id="3.10.20.90">
    <property type="entry name" value="Phosphatidylinositol 3-kinase Catalytic Subunit, Chain A, domain 1"/>
    <property type="match status" value="1"/>
</dbReference>
<dbReference type="InterPro" id="IPR036249">
    <property type="entry name" value="Thioredoxin-like_sf"/>
</dbReference>
<dbReference type="InterPro" id="IPR006577">
    <property type="entry name" value="UAS"/>
</dbReference>
<dbReference type="InterPro" id="IPR009060">
    <property type="entry name" value="UBA-like_sf"/>
</dbReference>
<dbReference type="InterPro" id="IPR054109">
    <property type="entry name" value="UBA_8"/>
</dbReference>
<dbReference type="InterPro" id="IPR029071">
    <property type="entry name" value="Ubiquitin-like_domsf"/>
</dbReference>
<dbReference type="InterPro" id="IPR017346">
    <property type="entry name" value="UBX_7/2"/>
</dbReference>
<dbReference type="InterPro" id="IPR001012">
    <property type="entry name" value="UBX_dom"/>
</dbReference>
<dbReference type="InterPro" id="IPR050730">
    <property type="entry name" value="UBX_domain-protein"/>
</dbReference>
<dbReference type="PANTHER" id="PTHR23322">
    <property type="entry name" value="FAS-ASSOCIATED PROTEIN"/>
    <property type="match status" value="1"/>
</dbReference>
<dbReference type="PANTHER" id="PTHR23322:SF6">
    <property type="entry name" value="UBX DOMAIN-CONTAINING PROTEIN 7"/>
    <property type="match status" value="1"/>
</dbReference>
<dbReference type="Pfam" id="PF13899">
    <property type="entry name" value="Thioredoxin_7"/>
    <property type="match status" value="1"/>
</dbReference>
<dbReference type="Pfam" id="PF22566">
    <property type="entry name" value="UBA_8"/>
    <property type="match status" value="1"/>
</dbReference>
<dbReference type="Pfam" id="PF00789">
    <property type="entry name" value="UBX"/>
    <property type="match status" value="1"/>
</dbReference>
<dbReference type="PIRSF" id="PIRSF037991">
    <property type="entry name" value="UCP037991_UBX7/2"/>
    <property type="match status" value="1"/>
</dbReference>
<dbReference type="SMART" id="SM00594">
    <property type="entry name" value="UAS"/>
    <property type="match status" value="1"/>
</dbReference>
<dbReference type="SMART" id="SM00166">
    <property type="entry name" value="UBX"/>
    <property type="match status" value="1"/>
</dbReference>
<dbReference type="SUPFAM" id="SSF52833">
    <property type="entry name" value="Thioredoxin-like"/>
    <property type="match status" value="1"/>
</dbReference>
<dbReference type="SUPFAM" id="SSF46934">
    <property type="entry name" value="UBA-like"/>
    <property type="match status" value="1"/>
</dbReference>
<dbReference type="SUPFAM" id="SSF54236">
    <property type="entry name" value="Ubiquitin-like"/>
    <property type="match status" value="1"/>
</dbReference>
<dbReference type="PROSITE" id="PS50033">
    <property type="entry name" value="UBX"/>
    <property type="match status" value="1"/>
</dbReference>
<proteinExistence type="evidence at protein level"/>
<keyword id="KW-0007">Acetylation</keyword>
<keyword id="KW-1017">Isopeptide bond</keyword>
<keyword id="KW-0539">Nucleus</keyword>
<keyword id="KW-0597">Phosphoprotein</keyword>
<keyword id="KW-1185">Reference proteome</keyword>
<keyword id="KW-0832">Ubl conjugation</keyword>
<evidence type="ECO:0000250" key="1">
    <source>
        <dbReference type="UniProtKB" id="O94888"/>
    </source>
</evidence>
<evidence type="ECO:0000255" key="2">
    <source>
        <dbReference type="PROSITE-ProRule" id="PRU00215"/>
    </source>
</evidence>
<evidence type="ECO:0000256" key="3">
    <source>
        <dbReference type="SAM" id="MobiDB-lite"/>
    </source>
</evidence>
<evidence type="ECO:0000305" key="4"/>
<evidence type="ECO:0007744" key="5">
    <source>
    </source>
</evidence>
<evidence type="ECO:0007744" key="6">
    <source>
    </source>
</evidence>